<reference key="1">
    <citation type="journal article" date="2007" name="PLoS Genet.">
        <title>Patterns and implications of gene gain and loss in the evolution of Prochlorococcus.</title>
        <authorList>
            <person name="Kettler G.C."/>
            <person name="Martiny A.C."/>
            <person name="Huang K."/>
            <person name="Zucker J."/>
            <person name="Coleman M.L."/>
            <person name="Rodrigue S."/>
            <person name="Chen F."/>
            <person name="Lapidus A."/>
            <person name="Ferriera S."/>
            <person name="Johnson J."/>
            <person name="Steglich C."/>
            <person name="Church G.M."/>
            <person name="Richardson P."/>
            <person name="Chisholm S.W."/>
        </authorList>
    </citation>
    <scope>NUCLEOTIDE SEQUENCE [LARGE SCALE GENOMIC DNA]</scope>
    <source>
        <strain>MIT 9301</strain>
    </source>
</reference>
<reference key="2">
    <citation type="journal article" date="2012" name="ISME J.">
        <title>Potential for phosphite and phosphonate utilization by Prochlorococcus.</title>
        <authorList>
            <person name="Feingersch R."/>
            <person name="Philosof A."/>
            <person name="Mejuch T."/>
            <person name="Glaser F."/>
            <person name="Alalouf O."/>
            <person name="Shoham Y."/>
            <person name="Beja O."/>
        </authorList>
    </citation>
    <scope>FUNCTION AS A BINDING PROTEIN</scope>
    <source>
        <strain>MIT 9301</strain>
    </source>
</reference>
<organism>
    <name type="scientific">Prochlorococcus marinus (strain MIT 9301)</name>
    <dbReference type="NCBI Taxonomy" id="167546"/>
    <lineage>
        <taxon>Bacteria</taxon>
        <taxon>Bacillati</taxon>
        <taxon>Cyanobacteriota</taxon>
        <taxon>Cyanophyceae</taxon>
        <taxon>Synechococcales</taxon>
        <taxon>Prochlorococcaceae</taxon>
        <taxon>Prochlorococcus</taxon>
    </lineage>
</organism>
<dbReference type="EMBL" id="CP000576">
    <property type="protein sequence ID" value="ABO17874.1"/>
    <property type="molecule type" value="Genomic_DNA"/>
</dbReference>
<dbReference type="PDB" id="5LV1">
    <property type="method" value="X-ray"/>
    <property type="resolution" value="2.12 A"/>
    <property type="chains" value="A/B/C=22-292"/>
</dbReference>
<dbReference type="PDBsum" id="5LV1"/>
<dbReference type="SMR" id="A3PDP9"/>
<dbReference type="STRING" id="167546.P9301_12511"/>
<dbReference type="KEGG" id="pmg:P9301_12511"/>
<dbReference type="eggNOG" id="COG3221">
    <property type="taxonomic scope" value="Bacteria"/>
</dbReference>
<dbReference type="HOGENOM" id="CLU_051472_6_4_3"/>
<dbReference type="OrthoDB" id="9781943at2"/>
<dbReference type="Proteomes" id="UP000001430">
    <property type="component" value="Chromosome"/>
</dbReference>
<dbReference type="GO" id="GO:0043190">
    <property type="term" value="C:ATP-binding cassette (ABC) transporter complex"/>
    <property type="evidence" value="ECO:0007669"/>
    <property type="project" value="InterPro"/>
</dbReference>
<dbReference type="GO" id="GO:0055085">
    <property type="term" value="P:transmembrane transport"/>
    <property type="evidence" value="ECO:0007669"/>
    <property type="project" value="InterPro"/>
</dbReference>
<dbReference type="CDD" id="cd13572">
    <property type="entry name" value="PBP2_PnhD_2"/>
    <property type="match status" value="1"/>
</dbReference>
<dbReference type="Gene3D" id="3.40.190.10">
    <property type="entry name" value="Periplasmic binding protein-like II"/>
    <property type="match status" value="2"/>
</dbReference>
<dbReference type="InterPro" id="IPR005770">
    <property type="entry name" value="PhnD"/>
</dbReference>
<dbReference type="NCBIfam" id="TIGR01098">
    <property type="entry name" value="3A0109s03R"/>
    <property type="match status" value="1"/>
</dbReference>
<dbReference type="PANTHER" id="PTHR35841">
    <property type="entry name" value="PHOSPHONATES-BINDING PERIPLASMIC PROTEIN"/>
    <property type="match status" value="1"/>
</dbReference>
<dbReference type="PANTHER" id="PTHR35841:SF1">
    <property type="entry name" value="PHOSPHONATES-BINDING PERIPLASMIC PROTEIN"/>
    <property type="match status" value="1"/>
</dbReference>
<dbReference type="Pfam" id="PF12974">
    <property type="entry name" value="Phosphonate-bd"/>
    <property type="match status" value="1"/>
</dbReference>
<dbReference type="SUPFAM" id="SSF53850">
    <property type="entry name" value="Periplasmic binding protein-like II"/>
    <property type="match status" value="1"/>
</dbReference>
<dbReference type="PROSITE" id="PS51257">
    <property type="entry name" value="PROKAR_LIPOPROTEIN"/>
    <property type="match status" value="1"/>
</dbReference>
<protein>
    <recommendedName>
        <fullName evidence="4">Probable ABC transporter phosphonate/phosphite binding protein PhnD2</fullName>
    </recommendedName>
</protein>
<keyword id="KW-0002">3D-structure</keyword>
<keyword id="KW-1003">Cell membrane</keyword>
<keyword id="KW-0449">Lipoprotein</keyword>
<keyword id="KW-0472">Membrane</keyword>
<keyword id="KW-0564">Palmitate</keyword>
<keyword id="KW-1185">Reference proteome</keyword>
<keyword id="KW-0732">Signal</keyword>
<accession>A3PDP9</accession>
<sequence length="292" mass="31304">MKLKSLLSVFTISIVALTSACSTKNAGPSADPDKLIVALIPDENAATVIQDNQGLKDYLTEAFDKEIELVVTTDYSSMIEAARNDRLDLAYFGPLSYVLAKAVSDIEPFAARIKGGTKTYNSCIIGNTKKGVTSFDDIKGTTFALGDPASTSSRLFPELTLAENGLTKGKDFQGVFLGSHDAVALAVQNGNAQAGGMACPILKSLKKKGVIDPSKVTTIAQSSPIPQYPWTMRSTLSPELKEKIRFTFLDLDSDKVLKPFNADGFASITDSDYDGIRKAGKLLGLDLSKFVK</sequence>
<gene>
    <name evidence="3" type="primary">phnD2</name>
    <name evidence="6" type="ordered locus">P9301_12511</name>
</gene>
<comment type="function">
    <text evidence="2">Probably part of the ABC transporter complex PhnC2D2E2. Binds strongly to methylphosphonate (MPn), ethylphosphonate (EPn) and inorganic phosphite.</text>
</comment>
<comment type="subunit">
    <text evidence="5">The complex may be composed of two ATP-binding proteins (PhnC2), two transmembrane proteins (PhnE2) and a solute-binding protein (PhnD2).</text>
</comment>
<comment type="subcellular location">
    <subcellularLocation>
        <location evidence="1">Cell membrane</location>
        <topology evidence="1">Lipid-anchor</topology>
    </subcellularLocation>
</comment>
<comment type="similarity">
    <text evidence="4">Belongs to the phosphate/phosphite/phosphonate binding protein family.</text>
</comment>
<proteinExistence type="evidence at protein level"/>
<feature type="signal peptide" evidence="1">
    <location>
        <begin position="1"/>
        <end position="20"/>
    </location>
</feature>
<feature type="chain" id="PRO_5002656612" description="Probable ABC transporter phosphonate/phosphite binding protein PhnD2" evidence="1">
    <location>
        <begin position="21"/>
        <end position="292"/>
    </location>
</feature>
<feature type="lipid moiety-binding region" description="N-palmitoyl cysteine" evidence="1">
    <location>
        <position position="21"/>
    </location>
</feature>
<feature type="lipid moiety-binding region" description="S-diacylglycerol cysteine" evidence="1">
    <location>
        <position position="21"/>
    </location>
</feature>
<feature type="strand" evidence="7">
    <location>
        <begin position="33"/>
        <end position="39"/>
    </location>
</feature>
<feature type="helix" evidence="7">
    <location>
        <begin position="45"/>
        <end position="51"/>
    </location>
</feature>
<feature type="helix" evidence="7">
    <location>
        <begin position="53"/>
        <end position="63"/>
    </location>
</feature>
<feature type="strand" evidence="7">
    <location>
        <begin position="65"/>
        <end position="71"/>
    </location>
</feature>
<feature type="helix" evidence="7">
    <location>
        <begin position="75"/>
        <end position="83"/>
    </location>
</feature>
<feature type="strand" evidence="7">
    <location>
        <begin position="88"/>
        <end position="91"/>
    </location>
</feature>
<feature type="helix" evidence="7">
    <location>
        <begin position="94"/>
        <end position="103"/>
    </location>
</feature>
<feature type="strand" evidence="7">
    <location>
        <begin position="106"/>
        <end position="114"/>
    </location>
</feature>
<feature type="strand" evidence="7">
    <location>
        <begin position="122"/>
        <end position="127"/>
    </location>
</feature>
<feature type="turn" evidence="7">
    <location>
        <begin position="128"/>
        <end position="131"/>
    </location>
</feature>
<feature type="helix" evidence="7">
    <location>
        <begin position="135"/>
        <end position="138"/>
    </location>
</feature>
<feature type="strand" evidence="7">
    <location>
        <begin position="141"/>
        <end position="145"/>
    </location>
</feature>
<feature type="turn" evidence="7">
    <location>
        <begin position="151"/>
        <end position="154"/>
    </location>
</feature>
<feature type="helix" evidence="7">
    <location>
        <begin position="155"/>
        <end position="162"/>
    </location>
</feature>
<feature type="turn" evidence="7">
    <location>
        <begin position="163"/>
        <end position="165"/>
    </location>
</feature>
<feature type="turn" evidence="7">
    <location>
        <begin position="168"/>
        <end position="170"/>
    </location>
</feature>
<feature type="strand" evidence="7">
    <location>
        <begin position="173"/>
        <end position="176"/>
    </location>
</feature>
<feature type="helix" evidence="7">
    <location>
        <begin position="180"/>
        <end position="188"/>
    </location>
</feature>
<feature type="strand" evidence="7">
    <location>
        <begin position="191"/>
        <end position="198"/>
    </location>
</feature>
<feature type="helix" evidence="7">
    <location>
        <begin position="199"/>
        <end position="207"/>
    </location>
</feature>
<feature type="turn" evidence="7">
    <location>
        <begin position="213"/>
        <end position="215"/>
    </location>
</feature>
<feature type="strand" evidence="7">
    <location>
        <begin position="216"/>
        <end position="221"/>
    </location>
</feature>
<feature type="strand" evidence="7">
    <location>
        <begin position="230"/>
        <end position="233"/>
    </location>
</feature>
<feature type="helix" evidence="7">
    <location>
        <begin position="238"/>
        <end position="250"/>
    </location>
</feature>
<feature type="helix" evidence="7">
    <location>
        <begin position="254"/>
        <end position="257"/>
    </location>
</feature>
<feature type="helix" evidence="7">
    <location>
        <begin position="258"/>
        <end position="260"/>
    </location>
</feature>
<feature type="strand" evidence="7">
    <location>
        <begin position="263"/>
        <end position="266"/>
    </location>
</feature>
<feature type="helix" evidence="7">
    <location>
        <begin position="270"/>
        <end position="273"/>
    </location>
</feature>
<feature type="helix" evidence="7">
    <location>
        <begin position="274"/>
        <end position="283"/>
    </location>
</feature>
<feature type="helix" evidence="7">
    <location>
        <begin position="287"/>
        <end position="290"/>
    </location>
</feature>
<name>PHND2_PROM0</name>
<evidence type="ECO:0000255" key="1">
    <source>
        <dbReference type="PROSITE-ProRule" id="PRU00303"/>
    </source>
</evidence>
<evidence type="ECO:0000269" key="2">
    <source>
    </source>
</evidence>
<evidence type="ECO:0000303" key="3">
    <source>
    </source>
</evidence>
<evidence type="ECO:0000305" key="4"/>
<evidence type="ECO:0000305" key="5">
    <source>
    </source>
</evidence>
<evidence type="ECO:0000312" key="6">
    <source>
        <dbReference type="EMBL" id="ABO17874.1"/>
    </source>
</evidence>
<evidence type="ECO:0007829" key="7">
    <source>
        <dbReference type="PDB" id="5LV1"/>
    </source>
</evidence>